<organism>
    <name type="scientific">Vaccinia virus (strain Copenhagen)</name>
    <name type="common">VACV</name>
    <dbReference type="NCBI Taxonomy" id="10249"/>
    <lineage>
        <taxon>Viruses</taxon>
        <taxon>Varidnaviria</taxon>
        <taxon>Bamfordvirae</taxon>
        <taxon>Nucleocytoviricota</taxon>
        <taxon>Pokkesviricetes</taxon>
        <taxon>Chitovirales</taxon>
        <taxon>Poxviridae</taxon>
        <taxon>Chordopoxvirinae</taxon>
        <taxon>Orthopoxvirus</taxon>
        <taxon>Vaccinia virus</taxon>
    </lineage>
</organism>
<dbReference type="EMBL" id="M35027">
    <property type="protein sequence ID" value="AAA48144.1"/>
    <property type="molecule type" value="Genomic_DNA"/>
</dbReference>
<dbReference type="PIR" id="D42524">
    <property type="entry name" value="D42524"/>
</dbReference>
<dbReference type="Proteomes" id="UP000008269">
    <property type="component" value="Segment"/>
</dbReference>
<proteinExistence type="predicted"/>
<gene>
    <name type="ORF">A ORF H</name>
</gene>
<keyword id="KW-1185">Reference proteome</keyword>
<feature type="chain" id="PRO_0000099649" description="Uncharacterized 14.5 kDa protein">
    <location>
        <begin position="1"/>
        <end position="128"/>
    </location>
</feature>
<organismHost>
    <name type="scientific">Homo sapiens</name>
    <name type="common">Human</name>
    <dbReference type="NCBI Taxonomy" id="9606"/>
</organismHost>
<name>YVAH_VACCC</name>
<sequence length="128" mass="14538">MENVFFFFTFTNVCSLTLDRIKWSTSFTNIFFPDFVITLGIKILSPIRSTLMDSIYMNENLKKSTTCRLSSPNLIYDMDIFGNLSSKERSIIEYNSSSNNVSSSISISKYLGMFNPYSLASLNILTGD</sequence>
<protein>
    <recommendedName>
        <fullName>Uncharacterized 14.5 kDa protein</fullName>
    </recommendedName>
</protein>
<accession>P20517</accession>
<reference key="1">
    <citation type="journal article" date="1990" name="Virology">
        <title>The complete DNA sequence of vaccinia virus.</title>
        <authorList>
            <person name="Goebel S.J."/>
            <person name="Johnson G.P."/>
            <person name="Perkus M.E."/>
            <person name="Davis S.W."/>
            <person name="Winslow J.P."/>
            <person name="Paoletti E."/>
        </authorList>
    </citation>
    <scope>NUCLEOTIDE SEQUENCE [LARGE SCALE GENOMIC DNA]</scope>
</reference>
<reference key="2">
    <citation type="journal article" date="1990" name="Virology">
        <title>Appendix to 'The complete DNA sequence of vaccinia virus'.</title>
        <authorList>
            <person name="Goebel S.J."/>
            <person name="Johnson G.P."/>
            <person name="Perkus M.E."/>
            <person name="Davis S.W."/>
            <person name="Winslow J.P."/>
            <person name="Paoletti E."/>
        </authorList>
    </citation>
    <scope>COMPLETE GENOME</scope>
</reference>